<name>PYHD_NPVPF</name>
<keyword id="KW-0842">Viral occlusion body</keyword>
<comment type="function">
    <text>Major component of the virus occlusion bodies, which are large proteinaceous structures (polyhedra), that protect the virus from the outside environment for extended periods until they are ingested by insect larvae.</text>
</comment>
<comment type="similarity">
    <text evidence="1">Belongs to the polyhedrin family.</text>
</comment>
<gene>
    <name type="primary">PH</name>
    <name type="synonym">P29</name>
    <name type="synonym">POLH</name>
</gene>
<accession>P22115</accession>
<evidence type="ECO:0000305" key="1"/>
<feature type="chain" id="PRO_0000217256" description="Polyhedrin">
    <location>
        <begin position="1"/>
        <end position="246"/>
    </location>
</feature>
<sequence>MYTRYSYNPSLGRTYVYDNKYYKNLGAVIKNANRKKHFIEHELEEKTLDPLDRYLVAEDPFLGPGKNQKLTLFKEIRNVKPDTMKLVVNWSGKEFLRETWTRFMEDSFPIVNDQEVMDVFLVINMRPTRPNRCYKFLAQHALRCDPEYVPHEVIRIVEPSYVGSNNEYRVSLAKRGGGCPVMNLHSEYTNSFEEFINRVIWENFYKPIVYVGTDSAEEEEILLEVSLVFKIKEFAPDAPLYNGPAY</sequence>
<organismHost>
    <name type="scientific">Lepidoptera</name>
    <name type="common">butterflies and moths</name>
    <dbReference type="NCBI Taxonomy" id="7088"/>
</organismHost>
<organism>
    <name type="scientific">Panolis flammea multiple nucleocapsid polyhedrosis virus</name>
    <name type="common">PfMNPV</name>
    <dbReference type="NCBI Taxonomy" id="10453"/>
    <lineage>
        <taxon>Viruses</taxon>
        <taxon>Viruses incertae sedis</taxon>
        <taxon>Naldaviricetes</taxon>
        <taxon>Lefavirales</taxon>
        <taxon>Baculoviridae</taxon>
        <taxon>Alphabaculovirus</taxon>
    </lineage>
</organism>
<proteinExistence type="inferred from homology"/>
<protein>
    <recommendedName>
        <fullName>Polyhedrin</fullName>
    </recommendedName>
    <alternativeName>
        <fullName>Major occlusion protein</fullName>
    </alternativeName>
</protein>
<reference key="1">
    <citation type="journal article" date="1989" name="J. Gen. Virol.">
        <title>Analysis of transcription initiation in the Panolis flammea nuclear polyhedrosis virus polyhedrin gene.</title>
        <authorList>
            <person name="Oakey R."/>
            <person name="Cameron I.R."/>
            <person name="Davis B."/>
            <person name="Davis E."/>
            <person name="Possee R.D."/>
        </authorList>
    </citation>
    <scope>NUCLEOTIDE SEQUENCE [GENOMIC DNA]</scope>
</reference>
<dbReference type="EMBL" id="D00437">
    <property type="protein sequence ID" value="BAA00338.1"/>
    <property type="molecule type" value="Genomic_DNA"/>
</dbReference>
<dbReference type="PIR" id="A31814">
    <property type="entry name" value="PYNVPF"/>
</dbReference>
<dbReference type="SMR" id="P22115"/>
<dbReference type="GO" id="GO:0039679">
    <property type="term" value="C:viral occlusion body"/>
    <property type="evidence" value="ECO:0007669"/>
    <property type="project" value="UniProtKB-KW"/>
</dbReference>
<dbReference type="GO" id="GO:0005198">
    <property type="term" value="F:structural molecule activity"/>
    <property type="evidence" value="ECO:0007669"/>
    <property type="project" value="InterPro"/>
</dbReference>
<dbReference type="InterPro" id="IPR001746">
    <property type="entry name" value="Polyhedrin"/>
</dbReference>
<dbReference type="Pfam" id="PF00738">
    <property type="entry name" value="Polyhedrin"/>
    <property type="match status" value="1"/>
</dbReference>